<organism>
    <name type="scientific">Methanococcus vannielii (strain ATCC 35089 / DSM 1224 / JCM 13029 / OCM 148 / SB)</name>
    <dbReference type="NCBI Taxonomy" id="406327"/>
    <lineage>
        <taxon>Archaea</taxon>
        <taxon>Methanobacteriati</taxon>
        <taxon>Methanobacteriota</taxon>
        <taxon>Methanomada group</taxon>
        <taxon>Methanococci</taxon>
        <taxon>Methanococcales</taxon>
        <taxon>Methanococcaceae</taxon>
        <taxon>Methanococcus</taxon>
    </lineage>
</organism>
<name>ENDA_METVS</name>
<evidence type="ECO:0000255" key="1">
    <source>
        <dbReference type="HAMAP-Rule" id="MF_01833"/>
    </source>
</evidence>
<protein>
    <recommendedName>
        <fullName evidence="1">tRNA-splicing endonuclease</fullName>
        <ecNumber evidence="1">4.6.1.16</ecNumber>
    </recommendedName>
    <alternativeName>
        <fullName evidence="1">tRNA-intron endonuclease</fullName>
    </alternativeName>
</protein>
<sequence>MMAKPKKTIPAKLSDERIVIYDKDGISRLNEKRYGELHENFLSLSYVEALYLVAKDWVLIRDKKNKILSFEELHEIAHVIDKKLCIRYLVYKDLRNRGYTVRTGLKYGSDFRLYERSNIDEVHSKYLVKVFSEEIPCEISEITGFVRVAHSVRKELVIAIVDADGSVVYYNMGYLKL</sequence>
<feature type="chain" id="PRO_0000309818" description="tRNA-splicing endonuclease">
    <location>
        <begin position="1"/>
        <end position="177"/>
    </location>
</feature>
<feature type="active site" evidence="1">
    <location>
        <position position="114"/>
    </location>
</feature>
<feature type="active site" evidence="1">
    <location>
        <position position="123"/>
    </location>
</feature>
<feature type="active site" evidence="1">
    <location>
        <position position="154"/>
    </location>
</feature>
<dbReference type="EC" id="4.6.1.16" evidence="1"/>
<dbReference type="EMBL" id="CP000742">
    <property type="protein sequence ID" value="ABR54361.1"/>
    <property type="molecule type" value="Genomic_DNA"/>
</dbReference>
<dbReference type="RefSeq" id="WP_011972264.1">
    <property type="nucleotide sequence ID" value="NC_009634.1"/>
</dbReference>
<dbReference type="SMR" id="A6UPD9"/>
<dbReference type="STRING" id="406327.Mevan_0454"/>
<dbReference type="GeneID" id="5325328"/>
<dbReference type="KEGG" id="mvn:Mevan_0454"/>
<dbReference type="eggNOG" id="arCOG01701">
    <property type="taxonomic scope" value="Archaea"/>
</dbReference>
<dbReference type="HOGENOM" id="CLU_114393_0_0_2"/>
<dbReference type="OrthoDB" id="46045at2157"/>
<dbReference type="Proteomes" id="UP000001107">
    <property type="component" value="Chromosome"/>
</dbReference>
<dbReference type="GO" id="GO:0005737">
    <property type="term" value="C:cytoplasm"/>
    <property type="evidence" value="ECO:0007669"/>
    <property type="project" value="TreeGrafter"/>
</dbReference>
<dbReference type="GO" id="GO:0016829">
    <property type="term" value="F:lyase activity"/>
    <property type="evidence" value="ECO:0007669"/>
    <property type="project" value="UniProtKB-KW"/>
</dbReference>
<dbReference type="GO" id="GO:0003676">
    <property type="term" value="F:nucleic acid binding"/>
    <property type="evidence" value="ECO:0007669"/>
    <property type="project" value="InterPro"/>
</dbReference>
<dbReference type="GO" id="GO:0000213">
    <property type="term" value="F:tRNA-intron endonuclease activity"/>
    <property type="evidence" value="ECO:0007669"/>
    <property type="project" value="UniProtKB-UniRule"/>
</dbReference>
<dbReference type="GO" id="GO:0006388">
    <property type="term" value="P:tRNA splicing, via endonucleolytic cleavage and ligation"/>
    <property type="evidence" value="ECO:0007669"/>
    <property type="project" value="UniProtKB-UniRule"/>
</dbReference>
<dbReference type="CDD" id="cd22363">
    <property type="entry name" value="tRNA-intron_lyase_C"/>
    <property type="match status" value="1"/>
</dbReference>
<dbReference type="FunFam" id="3.40.1350.10:FF:000006">
    <property type="entry name" value="tRNA-splicing endonuclease"/>
    <property type="match status" value="1"/>
</dbReference>
<dbReference type="Gene3D" id="3.40.1350.10">
    <property type="match status" value="1"/>
</dbReference>
<dbReference type="Gene3D" id="3.40.1170.20">
    <property type="entry name" value="tRNA intron endonuclease, N-terminal domain"/>
    <property type="match status" value="1"/>
</dbReference>
<dbReference type="HAMAP" id="MF_01833">
    <property type="entry name" value="EndA_short"/>
    <property type="match status" value="1"/>
</dbReference>
<dbReference type="InterPro" id="IPR011856">
    <property type="entry name" value="tRNA_endonuc-like_dom_sf"/>
</dbReference>
<dbReference type="InterPro" id="IPR036167">
    <property type="entry name" value="tRNA_intron_Endo_cat-like_sf"/>
</dbReference>
<dbReference type="InterPro" id="IPR006677">
    <property type="entry name" value="tRNA_intron_Endonuc_cat-like"/>
</dbReference>
<dbReference type="InterPro" id="IPR006678">
    <property type="entry name" value="tRNA_intron_Endonuc_N"/>
</dbReference>
<dbReference type="InterPro" id="IPR036740">
    <property type="entry name" value="tRNA_intron_Endonuc_N_sf"/>
</dbReference>
<dbReference type="InterPro" id="IPR006676">
    <property type="entry name" value="tRNA_splic"/>
</dbReference>
<dbReference type="InterPro" id="IPR016442">
    <property type="entry name" value="tRNA_splic_arch_short"/>
</dbReference>
<dbReference type="NCBIfam" id="TIGR00324">
    <property type="entry name" value="endA"/>
    <property type="match status" value="1"/>
</dbReference>
<dbReference type="PANTHER" id="PTHR21227">
    <property type="entry name" value="TRNA-SPLICING ENDONUCLEASE SUBUNIT SEN2"/>
    <property type="match status" value="1"/>
</dbReference>
<dbReference type="PANTHER" id="PTHR21227:SF0">
    <property type="entry name" value="TRNA-SPLICING ENDONUCLEASE SUBUNIT SEN2"/>
    <property type="match status" value="1"/>
</dbReference>
<dbReference type="Pfam" id="PF01974">
    <property type="entry name" value="tRNA_int_endo"/>
    <property type="match status" value="1"/>
</dbReference>
<dbReference type="Pfam" id="PF02778">
    <property type="entry name" value="tRNA_int_endo_N"/>
    <property type="match status" value="1"/>
</dbReference>
<dbReference type="PIRSF" id="PIRSF005285">
    <property type="entry name" value="tRNA_splic_archaea"/>
    <property type="match status" value="1"/>
</dbReference>
<dbReference type="SUPFAM" id="SSF53032">
    <property type="entry name" value="tRNA-intron endonuclease catalytic domain-like"/>
    <property type="match status" value="1"/>
</dbReference>
<dbReference type="SUPFAM" id="SSF55267">
    <property type="entry name" value="tRNA-intron endonuclease N-terminal domain-like"/>
    <property type="match status" value="1"/>
</dbReference>
<accession>A6UPD9</accession>
<comment type="function">
    <text evidence="1">Endonuclease that removes tRNA introns. Cleaves pre-tRNA at the 5'- and 3'-splice sites to release the intron. The products are an intron and two tRNA half-molecules bearing 2',3' cyclic phosphate and 5'-OH termini. Recognizes a pseudosymmetric substrate in which 2 bulged loops of 3 bases are separated by a stem of 4 bp.</text>
</comment>
<comment type="catalytic activity">
    <reaction evidence="1">
        <text>pretRNA = a 3'-half-tRNA molecule with a 5'-OH end + a 5'-half-tRNA molecule with a 2',3'-cyclic phosphate end + an intron with a 2',3'-cyclic phosphate and a 5'-hydroxyl terminus.</text>
        <dbReference type="EC" id="4.6.1.16"/>
    </reaction>
</comment>
<comment type="subunit">
    <text evidence="1">Homotetramer; although the tetramer contains four active sites, only two participate in the cleavage. Therefore, it should be considered as a dimer of dimers.</text>
</comment>
<comment type="similarity">
    <text evidence="1">Belongs to the tRNA-intron endonuclease family. Archaeal short subfamily.</text>
</comment>
<keyword id="KW-0456">Lyase</keyword>
<keyword id="KW-0819">tRNA processing</keyword>
<gene>
    <name evidence="1" type="primary">endA</name>
    <name type="ordered locus">Mevan_0454</name>
</gene>
<reference key="1">
    <citation type="submission" date="2007-06" db="EMBL/GenBank/DDBJ databases">
        <title>Complete sequence of Methanococcus vannielii SB.</title>
        <authorList>
            <consortium name="US DOE Joint Genome Institute"/>
            <person name="Copeland A."/>
            <person name="Lucas S."/>
            <person name="Lapidus A."/>
            <person name="Barry K."/>
            <person name="Glavina del Rio T."/>
            <person name="Dalin E."/>
            <person name="Tice H."/>
            <person name="Pitluck S."/>
            <person name="Chain P."/>
            <person name="Malfatti S."/>
            <person name="Shin M."/>
            <person name="Vergez L."/>
            <person name="Schmutz J."/>
            <person name="Larimer F."/>
            <person name="Land M."/>
            <person name="Hauser L."/>
            <person name="Kyrpides N."/>
            <person name="Anderson I."/>
            <person name="Sieprawska-Lupa M."/>
            <person name="Whitman W.B."/>
            <person name="Richardson P."/>
        </authorList>
    </citation>
    <scope>NUCLEOTIDE SEQUENCE [LARGE SCALE GENOMIC DNA]</scope>
    <source>
        <strain>ATCC 35089 / DSM 1224 / JCM 13029 / OCM 148 / SB</strain>
    </source>
</reference>
<proteinExistence type="inferred from homology"/>